<reference key="1">
    <citation type="journal article" date="2005" name="BMC Biol.">
        <title>The complete chloroplast DNA sequences of the charophycean green algae Staurastrum and Zygnema reveal that the chloroplast genome underwent extensive changes during the evolution of the Zygnematales.</title>
        <authorList>
            <person name="Turmel M."/>
            <person name="Otis C."/>
            <person name="Lemieux C."/>
        </authorList>
    </citation>
    <scope>NUCLEOTIDE SEQUENCE [LARGE SCALE GENOMIC DNA]</scope>
</reference>
<dbReference type="EMBL" id="AY958085">
    <property type="protein sequence ID" value="AAX45754.1"/>
    <property type="molecule type" value="Genomic_DNA"/>
</dbReference>
<dbReference type="RefSeq" id="YP_636455.1">
    <property type="nucleotide sequence ID" value="NC_008116.1"/>
</dbReference>
<dbReference type="SMR" id="Q32RS1"/>
<dbReference type="GeneID" id="4108615"/>
<dbReference type="GO" id="GO:0009507">
    <property type="term" value="C:chloroplast"/>
    <property type="evidence" value="ECO:0007669"/>
    <property type="project" value="UniProtKB-SubCell"/>
</dbReference>
<dbReference type="GO" id="GO:0005739">
    <property type="term" value="C:mitochondrion"/>
    <property type="evidence" value="ECO:0007669"/>
    <property type="project" value="GOC"/>
</dbReference>
<dbReference type="GO" id="GO:0015935">
    <property type="term" value="C:small ribosomal subunit"/>
    <property type="evidence" value="ECO:0007669"/>
    <property type="project" value="TreeGrafter"/>
</dbReference>
<dbReference type="GO" id="GO:0003735">
    <property type="term" value="F:structural constituent of ribosome"/>
    <property type="evidence" value="ECO:0007669"/>
    <property type="project" value="InterPro"/>
</dbReference>
<dbReference type="GO" id="GO:0032543">
    <property type="term" value="P:mitochondrial translation"/>
    <property type="evidence" value="ECO:0007669"/>
    <property type="project" value="TreeGrafter"/>
</dbReference>
<dbReference type="Gene3D" id="3.30.1320.10">
    <property type="match status" value="1"/>
</dbReference>
<dbReference type="HAMAP" id="MF_00385">
    <property type="entry name" value="Ribosomal_bS16"/>
    <property type="match status" value="1"/>
</dbReference>
<dbReference type="InterPro" id="IPR000307">
    <property type="entry name" value="Ribosomal_bS16"/>
</dbReference>
<dbReference type="InterPro" id="IPR020592">
    <property type="entry name" value="Ribosomal_bS16_CS"/>
</dbReference>
<dbReference type="InterPro" id="IPR023803">
    <property type="entry name" value="Ribosomal_bS16_dom_sf"/>
</dbReference>
<dbReference type="NCBIfam" id="TIGR00002">
    <property type="entry name" value="S16"/>
    <property type="match status" value="1"/>
</dbReference>
<dbReference type="PANTHER" id="PTHR12919">
    <property type="entry name" value="30S RIBOSOMAL PROTEIN S16"/>
    <property type="match status" value="1"/>
</dbReference>
<dbReference type="PANTHER" id="PTHR12919:SF20">
    <property type="entry name" value="SMALL RIBOSOMAL SUBUNIT PROTEIN BS16M"/>
    <property type="match status" value="1"/>
</dbReference>
<dbReference type="Pfam" id="PF00886">
    <property type="entry name" value="Ribosomal_S16"/>
    <property type="match status" value="1"/>
</dbReference>
<dbReference type="SUPFAM" id="SSF54565">
    <property type="entry name" value="Ribosomal protein S16"/>
    <property type="match status" value="1"/>
</dbReference>
<dbReference type="PROSITE" id="PS00732">
    <property type="entry name" value="RIBOSOMAL_S16"/>
    <property type="match status" value="1"/>
</dbReference>
<organism>
    <name type="scientific">Staurastrum punctulatum</name>
    <name type="common">Green alga</name>
    <name type="synonym">Cosmoastrum punctulatum</name>
    <dbReference type="NCBI Taxonomy" id="102822"/>
    <lineage>
        <taxon>Eukaryota</taxon>
        <taxon>Viridiplantae</taxon>
        <taxon>Streptophyta</taxon>
        <taxon>Zygnematophyceae</taxon>
        <taxon>Zygnematophycidae</taxon>
        <taxon>Desmidiales</taxon>
        <taxon>Desmidiaceae</taxon>
        <taxon>Staurastrum</taxon>
    </lineage>
</organism>
<gene>
    <name evidence="1" type="primary">rps16</name>
</gene>
<evidence type="ECO:0000255" key="1">
    <source>
        <dbReference type="HAMAP-Rule" id="MF_00385"/>
    </source>
</evidence>
<evidence type="ECO:0000305" key="2"/>
<accession>Q32RS1</accession>
<geneLocation type="chloroplast"/>
<sequence>MVKLRLKRYGRKQQPTYRIIAIDVRCRRDGKALKEVGFYDPLKDKTQLNVPAILTLLQHGAQPTDTVSHILQKAGVFEK</sequence>
<comment type="subcellular location">
    <subcellularLocation>
        <location>Plastid</location>
        <location>Chloroplast</location>
    </subcellularLocation>
</comment>
<comment type="similarity">
    <text evidence="1">Belongs to the bacterial ribosomal protein bS16 family.</text>
</comment>
<protein>
    <recommendedName>
        <fullName evidence="1">Small ribosomal subunit protein bS16c</fullName>
    </recommendedName>
    <alternativeName>
        <fullName evidence="2">30S ribosomal protein S16, chloroplastic</fullName>
    </alternativeName>
</protein>
<keyword id="KW-0150">Chloroplast</keyword>
<keyword id="KW-0934">Plastid</keyword>
<keyword id="KW-0687">Ribonucleoprotein</keyword>
<keyword id="KW-0689">Ribosomal protein</keyword>
<name>RR16_STAPU</name>
<proteinExistence type="inferred from homology"/>
<feature type="chain" id="PRO_0000276962" description="Small ribosomal subunit protein bS16c">
    <location>
        <begin position="1"/>
        <end position="79"/>
    </location>
</feature>